<evidence type="ECO:0000255" key="1">
    <source>
        <dbReference type="HAMAP-Rule" id="MF_00033"/>
    </source>
</evidence>
<feature type="chain" id="PRO_1000202018" description="UDP-N-acetylglucosamine--N-acetylmuramyl-(pentapeptide) pyrophosphoryl-undecaprenol N-acetylglucosamine transferase">
    <location>
        <begin position="1"/>
        <end position="368"/>
    </location>
</feature>
<feature type="binding site" evidence="1">
    <location>
        <begin position="11"/>
        <end position="13"/>
    </location>
    <ligand>
        <name>UDP-N-acetyl-alpha-D-glucosamine</name>
        <dbReference type="ChEBI" id="CHEBI:57705"/>
    </ligand>
</feature>
<feature type="binding site" evidence="1">
    <location>
        <position position="123"/>
    </location>
    <ligand>
        <name>UDP-N-acetyl-alpha-D-glucosamine</name>
        <dbReference type="ChEBI" id="CHEBI:57705"/>
    </ligand>
</feature>
<feature type="binding site" evidence="1">
    <location>
        <position position="164"/>
    </location>
    <ligand>
        <name>UDP-N-acetyl-alpha-D-glucosamine</name>
        <dbReference type="ChEBI" id="CHEBI:57705"/>
    </ligand>
</feature>
<feature type="binding site" evidence="1">
    <location>
        <position position="188"/>
    </location>
    <ligand>
        <name>UDP-N-acetyl-alpha-D-glucosamine</name>
        <dbReference type="ChEBI" id="CHEBI:57705"/>
    </ligand>
</feature>
<feature type="binding site" evidence="1">
    <location>
        <position position="250"/>
    </location>
    <ligand>
        <name>UDP-N-acetyl-alpha-D-glucosamine</name>
        <dbReference type="ChEBI" id="CHEBI:57705"/>
    </ligand>
</feature>
<feature type="binding site" evidence="1">
    <location>
        <position position="295"/>
    </location>
    <ligand>
        <name>UDP-N-acetyl-alpha-D-glucosamine</name>
        <dbReference type="ChEBI" id="CHEBI:57705"/>
    </ligand>
</feature>
<comment type="function">
    <text evidence="1">Cell wall formation. Catalyzes the transfer of a GlcNAc subunit on undecaprenyl-pyrophosphoryl-MurNAc-pentapeptide (lipid intermediate I) to form undecaprenyl-pyrophosphoryl-MurNAc-(pentapeptide)GlcNAc (lipid intermediate II).</text>
</comment>
<comment type="catalytic activity">
    <reaction evidence="1">
        <text>di-trans,octa-cis-undecaprenyl diphospho-N-acetyl-alpha-D-muramoyl-L-alanyl-D-glutamyl-meso-2,6-diaminopimeloyl-D-alanyl-D-alanine + UDP-N-acetyl-alpha-D-glucosamine = di-trans,octa-cis-undecaprenyl diphospho-[N-acetyl-alpha-D-glucosaminyl-(1-&gt;4)]-N-acetyl-alpha-D-muramoyl-L-alanyl-D-glutamyl-meso-2,6-diaminopimeloyl-D-alanyl-D-alanine + UDP + H(+)</text>
        <dbReference type="Rhea" id="RHEA:31227"/>
        <dbReference type="ChEBI" id="CHEBI:15378"/>
        <dbReference type="ChEBI" id="CHEBI:57705"/>
        <dbReference type="ChEBI" id="CHEBI:58223"/>
        <dbReference type="ChEBI" id="CHEBI:61387"/>
        <dbReference type="ChEBI" id="CHEBI:61388"/>
        <dbReference type="EC" id="2.4.1.227"/>
    </reaction>
</comment>
<comment type="pathway">
    <text evidence="1">Cell wall biogenesis; peptidoglycan biosynthesis.</text>
</comment>
<comment type="subcellular location">
    <subcellularLocation>
        <location evidence="1">Cell inner membrane</location>
        <topology evidence="1">Peripheral membrane protein</topology>
        <orientation evidence="1">Cytoplasmic side</orientation>
    </subcellularLocation>
</comment>
<comment type="similarity">
    <text evidence="1">Belongs to the glycosyltransferase 28 family. MurG subfamily.</text>
</comment>
<sequence>MTRLIVTTGGTGGHIFPALAVAEAAMRLSPGLDVLFIGGAGPEGELAAKAGLPFVALPAKGVFGRGIKALAAPFWMLRAFGLAGARIREFSPDVVCGFGGYAGFIPVAAARLMGVPTAIHEQNSVPGVTNKVLGRFVDRVFTTYPDEGGVFPATRTKRLGNPIRADIARAASAAPHPGTKRLLVLGGSQGAKAINDAVMAILPTLLDAGVKVRLQAGRADFERVTTQAHAVLAGREAKGDEPEVVIENFIDDMAAAYAWADLVLARAGATTLAEVTAAGKPSLLIPFPFATHDHQTVNAAFLARAGAAQSVAQNHLPGLDLAGTVIGLLGDPARLEAMGQAALGQALPHAADDIARALLAMAAHKGER</sequence>
<protein>
    <recommendedName>
        <fullName evidence="1">UDP-N-acetylglucosamine--N-acetylmuramyl-(pentapeptide) pyrophosphoryl-undecaprenol N-acetylglucosamine transferase</fullName>
        <ecNumber evidence="1">2.4.1.227</ecNumber>
    </recommendedName>
    <alternativeName>
        <fullName evidence="1">Undecaprenyl-PP-MurNAc-pentapeptide-UDPGlcNAc GlcNAc transferase</fullName>
    </alternativeName>
</protein>
<dbReference type="EC" id="2.4.1.227" evidence="1"/>
<dbReference type="EMBL" id="AP010904">
    <property type="protein sequence ID" value="BAH76818.1"/>
    <property type="molecule type" value="Genomic_DNA"/>
</dbReference>
<dbReference type="RefSeq" id="WP_015861968.1">
    <property type="nucleotide sequence ID" value="NC_012796.1"/>
</dbReference>
<dbReference type="SMR" id="C4XK69"/>
<dbReference type="STRING" id="573370.DMR_33270"/>
<dbReference type="CAZy" id="GT28">
    <property type="family name" value="Glycosyltransferase Family 28"/>
</dbReference>
<dbReference type="KEGG" id="dma:DMR_33270"/>
<dbReference type="eggNOG" id="COG0707">
    <property type="taxonomic scope" value="Bacteria"/>
</dbReference>
<dbReference type="HOGENOM" id="CLU_037404_0_1_7"/>
<dbReference type="OrthoDB" id="9808936at2"/>
<dbReference type="UniPathway" id="UPA00219"/>
<dbReference type="Proteomes" id="UP000009071">
    <property type="component" value="Chromosome"/>
</dbReference>
<dbReference type="GO" id="GO:0005886">
    <property type="term" value="C:plasma membrane"/>
    <property type="evidence" value="ECO:0007669"/>
    <property type="project" value="UniProtKB-SubCell"/>
</dbReference>
<dbReference type="GO" id="GO:0051991">
    <property type="term" value="F:UDP-N-acetyl-D-glucosamine:N-acetylmuramoyl-L-alanyl-D-glutamyl-meso-2,6-diaminopimelyl-D-alanyl-D-alanine-diphosphoundecaprenol 4-beta-N-acetylglucosaminlytransferase activity"/>
    <property type="evidence" value="ECO:0007669"/>
    <property type="project" value="RHEA"/>
</dbReference>
<dbReference type="GO" id="GO:0050511">
    <property type="term" value="F:undecaprenyldiphospho-muramoylpentapeptide beta-N-acetylglucosaminyltransferase activity"/>
    <property type="evidence" value="ECO:0007669"/>
    <property type="project" value="UniProtKB-UniRule"/>
</dbReference>
<dbReference type="GO" id="GO:0005975">
    <property type="term" value="P:carbohydrate metabolic process"/>
    <property type="evidence" value="ECO:0007669"/>
    <property type="project" value="InterPro"/>
</dbReference>
<dbReference type="GO" id="GO:0051301">
    <property type="term" value="P:cell division"/>
    <property type="evidence" value="ECO:0007669"/>
    <property type="project" value="UniProtKB-KW"/>
</dbReference>
<dbReference type="GO" id="GO:0071555">
    <property type="term" value="P:cell wall organization"/>
    <property type="evidence" value="ECO:0007669"/>
    <property type="project" value="UniProtKB-KW"/>
</dbReference>
<dbReference type="GO" id="GO:0030259">
    <property type="term" value="P:lipid glycosylation"/>
    <property type="evidence" value="ECO:0007669"/>
    <property type="project" value="UniProtKB-UniRule"/>
</dbReference>
<dbReference type="GO" id="GO:0009252">
    <property type="term" value="P:peptidoglycan biosynthetic process"/>
    <property type="evidence" value="ECO:0007669"/>
    <property type="project" value="UniProtKB-UniRule"/>
</dbReference>
<dbReference type="GO" id="GO:0008360">
    <property type="term" value="P:regulation of cell shape"/>
    <property type="evidence" value="ECO:0007669"/>
    <property type="project" value="UniProtKB-KW"/>
</dbReference>
<dbReference type="CDD" id="cd03785">
    <property type="entry name" value="GT28_MurG"/>
    <property type="match status" value="1"/>
</dbReference>
<dbReference type="Gene3D" id="3.40.50.2000">
    <property type="entry name" value="Glycogen Phosphorylase B"/>
    <property type="match status" value="2"/>
</dbReference>
<dbReference type="HAMAP" id="MF_00033">
    <property type="entry name" value="MurG"/>
    <property type="match status" value="1"/>
</dbReference>
<dbReference type="InterPro" id="IPR006009">
    <property type="entry name" value="GlcNAc_MurG"/>
</dbReference>
<dbReference type="InterPro" id="IPR007235">
    <property type="entry name" value="Glyco_trans_28_C"/>
</dbReference>
<dbReference type="InterPro" id="IPR004276">
    <property type="entry name" value="GlycoTrans_28_N"/>
</dbReference>
<dbReference type="NCBIfam" id="TIGR01133">
    <property type="entry name" value="murG"/>
    <property type="match status" value="1"/>
</dbReference>
<dbReference type="PANTHER" id="PTHR21015:SF22">
    <property type="entry name" value="GLYCOSYLTRANSFERASE"/>
    <property type="match status" value="1"/>
</dbReference>
<dbReference type="PANTHER" id="PTHR21015">
    <property type="entry name" value="UDP-N-ACETYLGLUCOSAMINE--N-ACETYLMURAMYL-(PENTAPEPTIDE) PYROPHOSPHORYL-UNDECAPRENOL N-ACETYLGLUCOSAMINE TRANSFERASE 1"/>
    <property type="match status" value="1"/>
</dbReference>
<dbReference type="Pfam" id="PF04101">
    <property type="entry name" value="Glyco_tran_28_C"/>
    <property type="match status" value="1"/>
</dbReference>
<dbReference type="Pfam" id="PF03033">
    <property type="entry name" value="Glyco_transf_28"/>
    <property type="match status" value="1"/>
</dbReference>
<dbReference type="SUPFAM" id="SSF53756">
    <property type="entry name" value="UDP-Glycosyltransferase/glycogen phosphorylase"/>
    <property type="match status" value="1"/>
</dbReference>
<accession>C4XK69</accession>
<proteinExistence type="inferred from homology"/>
<name>MURG_SOLM1</name>
<reference key="1">
    <citation type="journal article" date="2009" name="Genome Res.">
        <title>Whole genome sequence of Desulfovibrio magneticus strain RS-1 revealed common gene clusters in magnetotactic bacteria.</title>
        <authorList>
            <person name="Nakazawa H."/>
            <person name="Arakaki A."/>
            <person name="Narita-Yamada S."/>
            <person name="Yashiro I."/>
            <person name="Jinno K."/>
            <person name="Aoki N."/>
            <person name="Tsuruyama A."/>
            <person name="Okamura Y."/>
            <person name="Tanikawa S."/>
            <person name="Fujita N."/>
            <person name="Takeyama H."/>
            <person name="Matsunaga T."/>
        </authorList>
    </citation>
    <scope>NUCLEOTIDE SEQUENCE [LARGE SCALE GENOMIC DNA]</scope>
    <source>
        <strain>ATCC 700980 / DSM 13731 / RS-1</strain>
    </source>
</reference>
<keyword id="KW-0131">Cell cycle</keyword>
<keyword id="KW-0132">Cell division</keyword>
<keyword id="KW-0997">Cell inner membrane</keyword>
<keyword id="KW-1003">Cell membrane</keyword>
<keyword id="KW-0133">Cell shape</keyword>
<keyword id="KW-0961">Cell wall biogenesis/degradation</keyword>
<keyword id="KW-0328">Glycosyltransferase</keyword>
<keyword id="KW-0472">Membrane</keyword>
<keyword id="KW-0573">Peptidoglycan synthesis</keyword>
<keyword id="KW-0808">Transferase</keyword>
<organism>
    <name type="scientific">Solidesulfovibrio magneticus (strain ATCC 700980 / DSM 13731 / RS-1)</name>
    <name type="common">Desulfovibrio magneticus</name>
    <dbReference type="NCBI Taxonomy" id="573370"/>
    <lineage>
        <taxon>Bacteria</taxon>
        <taxon>Pseudomonadati</taxon>
        <taxon>Thermodesulfobacteriota</taxon>
        <taxon>Desulfovibrionia</taxon>
        <taxon>Desulfovibrionales</taxon>
        <taxon>Desulfovibrionaceae</taxon>
        <taxon>Solidesulfovibrio</taxon>
    </lineage>
</organism>
<gene>
    <name evidence="1" type="primary">murG</name>
    <name type="ordered locus">DMR_33270</name>
</gene>